<dbReference type="EMBL" id="AL009126">
    <property type="protein sequence ID" value="CAB14652.1"/>
    <property type="molecule type" value="Genomic_DNA"/>
</dbReference>
<dbReference type="EMBL" id="U93874">
    <property type="protein sequence ID" value="AAB80873.1"/>
    <property type="molecule type" value="Genomic_DNA"/>
</dbReference>
<dbReference type="PIR" id="F69975">
    <property type="entry name" value="F69975"/>
</dbReference>
<dbReference type="RefSeq" id="NP_390588.1">
    <property type="nucleotide sequence ID" value="NC_000964.3"/>
</dbReference>
<dbReference type="RefSeq" id="WP_003229828.1">
    <property type="nucleotide sequence ID" value="NZ_OZ025638.1"/>
</dbReference>
<dbReference type="FunCoup" id="O05406">
    <property type="interactions" value="98"/>
</dbReference>
<dbReference type="STRING" id="224308.BSU27100"/>
<dbReference type="PaxDb" id="224308-BSU27100"/>
<dbReference type="EnsemblBacteria" id="CAB14652">
    <property type="protein sequence ID" value="CAB14652"/>
    <property type="gene ID" value="BSU_27100"/>
</dbReference>
<dbReference type="GeneID" id="937592"/>
<dbReference type="KEGG" id="bsu:BSU27100"/>
<dbReference type="PATRIC" id="fig|224308.179.peg.2943"/>
<dbReference type="eggNOG" id="COG1280">
    <property type="taxonomic scope" value="Bacteria"/>
</dbReference>
<dbReference type="InParanoid" id="O05406"/>
<dbReference type="OrthoDB" id="9784202at2"/>
<dbReference type="PhylomeDB" id="O05406"/>
<dbReference type="BioCyc" id="BSUB:BSU27100-MONOMER"/>
<dbReference type="Proteomes" id="UP000001570">
    <property type="component" value="Chromosome"/>
</dbReference>
<dbReference type="GO" id="GO:0005886">
    <property type="term" value="C:plasma membrane"/>
    <property type="evidence" value="ECO:0000318"/>
    <property type="project" value="GO_Central"/>
</dbReference>
<dbReference type="GO" id="GO:0015171">
    <property type="term" value="F:amino acid transmembrane transporter activity"/>
    <property type="evidence" value="ECO:0000318"/>
    <property type="project" value="GO_Central"/>
</dbReference>
<dbReference type="GO" id="GO:0006865">
    <property type="term" value="P:amino acid transport"/>
    <property type="evidence" value="ECO:0000318"/>
    <property type="project" value="GO_Central"/>
</dbReference>
<dbReference type="InterPro" id="IPR004778">
    <property type="entry name" value="Homoserine/Threonine_efflux"/>
</dbReference>
<dbReference type="InterPro" id="IPR001123">
    <property type="entry name" value="LeuE-type"/>
</dbReference>
<dbReference type="NCBIfam" id="TIGR00949">
    <property type="entry name" value="2A76"/>
    <property type="match status" value="1"/>
</dbReference>
<dbReference type="PANTHER" id="PTHR30086">
    <property type="entry name" value="ARGININE EXPORTER PROTEIN ARGO"/>
    <property type="match status" value="1"/>
</dbReference>
<dbReference type="PANTHER" id="PTHR30086:SF20">
    <property type="entry name" value="ARGININE EXPORTER PROTEIN ARGO-RELATED"/>
    <property type="match status" value="1"/>
</dbReference>
<dbReference type="Pfam" id="PF01810">
    <property type="entry name" value="LysE"/>
    <property type="match status" value="1"/>
</dbReference>
<dbReference type="PIRSF" id="PIRSF006324">
    <property type="entry name" value="LeuE"/>
    <property type="match status" value="1"/>
</dbReference>
<feature type="chain" id="PRO_0000094745" description="Uncharacterized membrane protein YrhP">
    <location>
        <begin position="1"/>
        <end position="210"/>
    </location>
</feature>
<feature type="transmembrane region" description="Helical" evidence="1">
    <location>
        <begin position="5"/>
        <end position="25"/>
    </location>
</feature>
<feature type="transmembrane region" description="Helical" evidence="1">
    <location>
        <begin position="50"/>
        <end position="70"/>
    </location>
</feature>
<feature type="transmembrane region" description="Helical" evidence="1">
    <location>
        <begin position="75"/>
        <end position="95"/>
    </location>
</feature>
<feature type="transmembrane region" description="Helical" evidence="1">
    <location>
        <begin position="155"/>
        <end position="175"/>
    </location>
</feature>
<organism>
    <name type="scientific">Bacillus subtilis (strain 168)</name>
    <dbReference type="NCBI Taxonomy" id="224308"/>
    <lineage>
        <taxon>Bacteria</taxon>
        <taxon>Bacillati</taxon>
        <taxon>Bacillota</taxon>
        <taxon>Bacilli</taxon>
        <taxon>Bacillales</taxon>
        <taxon>Bacillaceae</taxon>
        <taxon>Bacillus</taxon>
    </lineage>
</organism>
<evidence type="ECO:0000255" key="1"/>
<evidence type="ECO:0000305" key="2"/>
<comment type="subcellular location">
    <subcellularLocation>
        <location evidence="2">Cell membrane</location>
        <topology evidence="2">Multi-pass membrane protein</topology>
    </subcellularLocation>
</comment>
<comment type="similarity">
    <text evidence="2">Belongs to the Rht family.</text>
</comment>
<proteinExistence type="inferred from homology"/>
<reference key="1">
    <citation type="journal article" date="1997" name="Nature">
        <title>The complete genome sequence of the Gram-positive bacterium Bacillus subtilis.</title>
        <authorList>
            <person name="Kunst F."/>
            <person name="Ogasawara N."/>
            <person name="Moszer I."/>
            <person name="Albertini A.M."/>
            <person name="Alloni G."/>
            <person name="Azevedo V."/>
            <person name="Bertero M.G."/>
            <person name="Bessieres P."/>
            <person name="Bolotin A."/>
            <person name="Borchert S."/>
            <person name="Borriss R."/>
            <person name="Boursier L."/>
            <person name="Brans A."/>
            <person name="Braun M."/>
            <person name="Brignell S.C."/>
            <person name="Bron S."/>
            <person name="Brouillet S."/>
            <person name="Bruschi C.V."/>
            <person name="Caldwell B."/>
            <person name="Capuano V."/>
            <person name="Carter N.M."/>
            <person name="Choi S.-K."/>
            <person name="Codani J.-J."/>
            <person name="Connerton I.F."/>
            <person name="Cummings N.J."/>
            <person name="Daniel R.A."/>
            <person name="Denizot F."/>
            <person name="Devine K.M."/>
            <person name="Duesterhoeft A."/>
            <person name="Ehrlich S.D."/>
            <person name="Emmerson P.T."/>
            <person name="Entian K.-D."/>
            <person name="Errington J."/>
            <person name="Fabret C."/>
            <person name="Ferrari E."/>
            <person name="Foulger D."/>
            <person name="Fritz C."/>
            <person name="Fujita M."/>
            <person name="Fujita Y."/>
            <person name="Fuma S."/>
            <person name="Galizzi A."/>
            <person name="Galleron N."/>
            <person name="Ghim S.-Y."/>
            <person name="Glaser P."/>
            <person name="Goffeau A."/>
            <person name="Golightly E.J."/>
            <person name="Grandi G."/>
            <person name="Guiseppi G."/>
            <person name="Guy B.J."/>
            <person name="Haga K."/>
            <person name="Haiech J."/>
            <person name="Harwood C.R."/>
            <person name="Henaut A."/>
            <person name="Hilbert H."/>
            <person name="Holsappel S."/>
            <person name="Hosono S."/>
            <person name="Hullo M.-F."/>
            <person name="Itaya M."/>
            <person name="Jones L.-M."/>
            <person name="Joris B."/>
            <person name="Karamata D."/>
            <person name="Kasahara Y."/>
            <person name="Klaerr-Blanchard M."/>
            <person name="Klein C."/>
            <person name="Kobayashi Y."/>
            <person name="Koetter P."/>
            <person name="Koningstein G."/>
            <person name="Krogh S."/>
            <person name="Kumano M."/>
            <person name="Kurita K."/>
            <person name="Lapidus A."/>
            <person name="Lardinois S."/>
            <person name="Lauber J."/>
            <person name="Lazarevic V."/>
            <person name="Lee S.-M."/>
            <person name="Levine A."/>
            <person name="Liu H."/>
            <person name="Masuda S."/>
            <person name="Mauel C."/>
            <person name="Medigue C."/>
            <person name="Medina N."/>
            <person name="Mellado R.P."/>
            <person name="Mizuno M."/>
            <person name="Moestl D."/>
            <person name="Nakai S."/>
            <person name="Noback M."/>
            <person name="Noone D."/>
            <person name="O'Reilly M."/>
            <person name="Ogawa K."/>
            <person name="Ogiwara A."/>
            <person name="Oudega B."/>
            <person name="Park S.-H."/>
            <person name="Parro V."/>
            <person name="Pohl T.M."/>
            <person name="Portetelle D."/>
            <person name="Porwollik S."/>
            <person name="Prescott A.M."/>
            <person name="Presecan E."/>
            <person name="Pujic P."/>
            <person name="Purnelle B."/>
            <person name="Rapoport G."/>
            <person name="Rey M."/>
            <person name="Reynolds S."/>
            <person name="Rieger M."/>
            <person name="Rivolta C."/>
            <person name="Rocha E."/>
            <person name="Roche B."/>
            <person name="Rose M."/>
            <person name="Sadaie Y."/>
            <person name="Sato T."/>
            <person name="Scanlan E."/>
            <person name="Schleich S."/>
            <person name="Schroeter R."/>
            <person name="Scoffone F."/>
            <person name="Sekiguchi J."/>
            <person name="Sekowska A."/>
            <person name="Seror S.J."/>
            <person name="Serror P."/>
            <person name="Shin B.-S."/>
            <person name="Soldo B."/>
            <person name="Sorokin A."/>
            <person name="Tacconi E."/>
            <person name="Takagi T."/>
            <person name="Takahashi H."/>
            <person name="Takemaru K."/>
            <person name="Takeuchi M."/>
            <person name="Tamakoshi A."/>
            <person name="Tanaka T."/>
            <person name="Terpstra P."/>
            <person name="Tognoni A."/>
            <person name="Tosato V."/>
            <person name="Uchiyama S."/>
            <person name="Vandenbol M."/>
            <person name="Vannier F."/>
            <person name="Vassarotti A."/>
            <person name="Viari A."/>
            <person name="Wambutt R."/>
            <person name="Wedler E."/>
            <person name="Wedler H."/>
            <person name="Weitzenegger T."/>
            <person name="Winters P."/>
            <person name="Wipat A."/>
            <person name="Yamamoto H."/>
            <person name="Yamane K."/>
            <person name="Yasumoto K."/>
            <person name="Yata K."/>
            <person name="Yoshida K."/>
            <person name="Yoshikawa H.-F."/>
            <person name="Zumstein E."/>
            <person name="Yoshikawa H."/>
            <person name="Danchin A."/>
        </authorList>
    </citation>
    <scope>NUCLEOTIDE SEQUENCE [LARGE SCALE GENOMIC DNA]</scope>
    <source>
        <strain>168</strain>
    </source>
</reference>
<reference key="2">
    <citation type="journal article" date="1997" name="Microbiology">
        <title>Sequence of the Bacillus subtilis genome region in the vicinity of the lev operon reveals two new extracytoplasmic function RNA polymerase sigma factors SigV and SigZ.</title>
        <authorList>
            <person name="Sorokin A."/>
            <person name="Bolotin A."/>
            <person name="Purnelle B."/>
            <person name="Hilbert H."/>
            <person name="Lauber J."/>
            <person name="Duesterhoeft A."/>
            <person name="Ehrlich S.D."/>
        </authorList>
    </citation>
    <scope>NUCLEOTIDE SEQUENCE [GENOMIC DNA] OF 1-141</scope>
    <source>
        <strain>168</strain>
    </source>
</reference>
<name>YRHP_BACSU</name>
<keyword id="KW-1003">Cell membrane</keyword>
<keyword id="KW-0472">Membrane</keyword>
<keyword id="KW-1185">Reference proteome</keyword>
<keyword id="KW-0812">Transmembrane</keyword>
<keyword id="KW-1133">Transmembrane helix</keyword>
<sequence>MHSLLAYIPIAAMMVIIPGADTMLVMKNTLRYGPKAGRYNILGLATGLSFWTVIAILGLSVVIAKSVILFTTIKYLGAAYLIYLGVKSFFAKSMFSLDDMQSQAKNMASSPKRYYKTSFMQGSLSNILNPKTVLVYVTIMPQFINLNGNINQQLIILASILTLLAVLWFLFLVYIIDYAKKWMKNSKFQKVFQKITGIILVGFGIKTGLS</sequence>
<protein>
    <recommendedName>
        <fullName>Uncharacterized membrane protein YrhP</fullName>
    </recommendedName>
</protein>
<gene>
    <name type="primary">yrhP</name>
    <name type="ordered locus">BSU27100</name>
</gene>
<accession>O05406</accession>